<dbReference type="EC" id="3.1.15.-"/>
<dbReference type="EMBL" id="Z72502">
    <property type="protein sequence ID" value="CAA96590.1"/>
    <property type="molecule type" value="Genomic_DNA"/>
</dbReference>
<dbReference type="PIR" id="T19081">
    <property type="entry name" value="T19081"/>
</dbReference>
<dbReference type="RefSeq" id="NP_001256185.1">
    <property type="nucleotide sequence ID" value="NM_001269256.3"/>
</dbReference>
<dbReference type="SMR" id="Q17819"/>
<dbReference type="BioGRID" id="44442">
    <property type="interactions" value="3"/>
</dbReference>
<dbReference type="FunCoup" id="Q17819">
    <property type="interactions" value="2850"/>
</dbReference>
<dbReference type="STRING" id="6239.C08B6.8a.1"/>
<dbReference type="PaxDb" id="6239-C08B6.8a"/>
<dbReference type="PeptideAtlas" id="Q17819"/>
<dbReference type="EnsemblMetazoa" id="C08B6.8a.1">
    <property type="protein sequence ID" value="C08B6.8a.1"/>
    <property type="gene ID" value="WBGene00007429"/>
</dbReference>
<dbReference type="GeneID" id="179411"/>
<dbReference type="KEGG" id="cel:CELE_C08B6.8"/>
<dbReference type="UCSC" id="C08B6.8">
    <property type="organism name" value="c. elegans"/>
</dbReference>
<dbReference type="AGR" id="WB:WBGene00007429"/>
<dbReference type="CTD" id="179411"/>
<dbReference type="WormBase" id="C08B6.8a">
    <property type="protein sequence ID" value="CE05245"/>
    <property type="gene ID" value="WBGene00007429"/>
</dbReference>
<dbReference type="eggNOG" id="KOG3242">
    <property type="taxonomic scope" value="Eukaryota"/>
</dbReference>
<dbReference type="GeneTree" id="ENSGT00390000009255"/>
<dbReference type="HOGENOM" id="CLU_064761_4_0_1"/>
<dbReference type="InParanoid" id="Q17819"/>
<dbReference type="OMA" id="AFFHYRN"/>
<dbReference type="OrthoDB" id="270189at2759"/>
<dbReference type="PhylomeDB" id="Q17819"/>
<dbReference type="PRO" id="PR:Q17819"/>
<dbReference type="Proteomes" id="UP000001940">
    <property type="component" value="Chromosome V"/>
</dbReference>
<dbReference type="Bgee" id="WBGene00007429">
    <property type="expression patterns" value="Expressed in germ line (C elegans) and 4 other cell types or tissues"/>
</dbReference>
<dbReference type="ExpressionAtlas" id="Q17819">
    <property type="expression patterns" value="baseline and differential"/>
</dbReference>
<dbReference type="GO" id="GO:0000175">
    <property type="term" value="F:3'-5'-RNA exonuclease activity"/>
    <property type="evidence" value="ECO:0007669"/>
    <property type="project" value="InterPro"/>
</dbReference>
<dbReference type="GO" id="GO:0003676">
    <property type="term" value="F:nucleic acid binding"/>
    <property type="evidence" value="ECO:0007669"/>
    <property type="project" value="InterPro"/>
</dbReference>
<dbReference type="CDD" id="cd06135">
    <property type="entry name" value="Orn"/>
    <property type="match status" value="1"/>
</dbReference>
<dbReference type="FunFam" id="3.30.420.10:FF:000003">
    <property type="entry name" value="Oligoribonuclease"/>
    <property type="match status" value="1"/>
</dbReference>
<dbReference type="Gene3D" id="3.30.420.10">
    <property type="entry name" value="Ribonuclease H-like superfamily/Ribonuclease H"/>
    <property type="match status" value="1"/>
</dbReference>
<dbReference type="InterPro" id="IPR013520">
    <property type="entry name" value="Exonuclease_RNaseT/DNA_pol3"/>
</dbReference>
<dbReference type="InterPro" id="IPR022894">
    <property type="entry name" value="Oligoribonuclease"/>
</dbReference>
<dbReference type="InterPro" id="IPR012337">
    <property type="entry name" value="RNaseH-like_sf"/>
</dbReference>
<dbReference type="InterPro" id="IPR036397">
    <property type="entry name" value="RNaseH_sf"/>
</dbReference>
<dbReference type="NCBIfam" id="NF003765">
    <property type="entry name" value="PRK05359.1"/>
    <property type="match status" value="1"/>
</dbReference>
<dbReference type="PANTHER" id="PTHR11046">
    <property type="entry name" value="OLIGORIBONUCLEASE, MITOCHONDRIAL"/>
    <property type="match status" value="1"/>
</dbReference>
<dbReference type="PANTHER" id="PTHR11046:SF0">
    <property type="entry name" value="OLIGORIBONUCLEASE, MITOCHONDRIAL"/>
    <property type="match status" value="1"/>
</dbReference>
<dbReference type="Pfam" id="PF00929">
    <property type="entry name" value="RNase_T"/>
    <property type="match status" value="1"/>
</dbReference>
<dbReference type="SMART" id="SM00479">
    <property type="entry name" value="EXOIII"/>
    <property type="match status" value="1"/>
</dbReference>
<dbReference type="SUPFAM" id="SSF53098">
    <property type="entry name" value="Ribonuclease H-like"/>
    <property type="match status" value="1"/>
</dbReference>
<gene>
    <name type="ORF">C08B6.8</name>
</gene>
<comment type="function">
    <text evidence="1">3'-to-5' exoribonuclease specific for small oligoribonucleotides.</text>
</comment>
<comment type="similarity">
    <text evidence="3">Belongs to the oligoribonuclease family.</text>
</comment>
<reference key="1">
    <citation type="journal article" date="1998" name="Science">
        <title>Genome sequence of the nematode C. elegans: a platform for investigating biology.</title>
        <authorList>
            <consortium name="The C. elegans sequencing consortium"/>
        </authorList>
    </citation>
    <scope>NUCLEOTIDE SEQUENCE [LARGE SCALE GENOMIC DNA]</scope>
    <source>
        <strain>Bristol N2</strain>
    </source>
</reference>
<proteinExistence type="inferred from homology"/>
<feature type="chain" id="PRO_0000111090" description="Probable oligoribonuclease">
    <location>
        <begin position="1"/>
        <end position="193"/>
    </location>
</feature>
<feature type="domain" description="Exonuclease">
    <location>
        <begin position="15"/>
        <end position="177"/>
    </location>
</feature>
<feature type="active site" evidence="2">
    <location>
        <position position="136"/>
    </location>
</feature>
<organism>
    <name type="scientific">Caenorhabditis elegans</name>
    <dbReference type="NCBI Taxonomy" id="6239"/>
    <lineage>
        <taxon>Eukaryota</taxon>
        <taxon>Metazoa</taxon>
        <taxon>Ecdysozoa</taxon>
        <taxon>Nematoda</taxon>
        <taxon>Chromadorea</taxon>
        <taxon>Rhabditida</taxon>
        <taxon>Rhabditina</taxon>
        <taxon>Rhabditomorpha</taxon>
        <taxon>Rhabditoidea</taxon>
        <taxon>Rhabditidae</taxon>
        <taxon>Peloderinae</taxon>
        <taxon>Caenorhabditis</taxon>
    </lineage>
</organism>
<keyword id="KW-0269">Exonuclease</keyword>
<keyword id="KW-0378">Hydrolase</keyword>
<keyword id="KW-0540">Nuclease</keyword>
<keyword id="KW-1185">Reference proteome</keyword>
<evidence type="ECO:0000250" key="1"/>
<evidence type="ECO:0000255" key="2"/>
<evidence type="ECO:0000305" key="3"/>
<name>ORN_CAEEL</name>
<sequence>MSTLYHTCDKIEQRIIWIDCEMTGLDVEKQTLCEIALIVTDSELNTIATGPDIVIHQPKEVLDNMEEWPRNTFHENGLMEKIIASKYSMADAENEVIDFLKLHALPGKSPIAGNSIYMDRLFIKKYMPKLDKFAHYRCIDVSTIKGLVQRWYPDYKHPKKQCTHRAFDDIMESIAELKNYRESIFVKSTASSF</sequence>
<protein>
    <recommendedName>
        <fullName>Probable oligoribonuclease</fullName>
        <ecNumber>3.1.15.-</ecNumber>
    </recommendedName>
</protein>
<accession>Q17819</accession>